<keyword id="KW-0030">Aminoacyl-tRNA synthetase</keyword>
<keyword id="KW-0067">ATP-binding</keyword>
<keyword id="KW-0963">Cytoplasm</keyword>
<keyword id="KW-0436">Ligase</keyword>
<keyword id="KW-0547">Nucleotide-binding</keyword>
<keyword id="KW-0648">Protein biosynthesis</keyword>
<dbReference type="EC" id="6.1.1.23" evidence="1"/>
<dbReference type="EMBL" id="CP001157">
    <property type="protein sequence ID" value="ACO79820.1"/>
    <property type="molecule type" value="Genomic_DNA"/>
</dbReference>
<dbReference type="RefSeq" id="WP_012702195.1">
    <property type="nucleotide sequence ID" value="NC_012560.1"/>
</dbReference>
<dbReference type="SMR" id="C1DRG2"/>
<dbReference type="STRING" id="322710.Avin_36730"/>
<dbReference type="EnsemblBacteria" id="ACO79820">
    <property type="protein sequence ID" value="ACO79820"/>
    <property type="gene ID" value="Avin_36730"/>
</dbReference>
<dbReference type="GeneID" id="88186658"/>
<dbReference type="KEGG" id="avn:Avin_36730"/>
<dbReference type="eggNOG" id="COG0173">
    <property type="taxonomic scope" value="Bacteria"/>
</dbReference>
<dbReference type="HOGENOM" id="CLU_014330_3_2_6"/>
<dbReference type="OrthoDB" id="9802326at2"/>
<dbReference type="Proteomes" id="UP000002424">
    <property type="component" value="Chromosome"/>
</dbReference>
<dbReference type="GO" id="GO:0005737">
    <property type="term" value="C:cytoplasm"/>
    <property type="evidence" value="ECO:0007669"/>
    <property type="project" value="UniProtKB-SubCell"/>
</dbReference>
<dbReference type="GO" id="GO:0004815">
    <property type="term" value="F:aspartate-tRNA ligase activity"/>
    <property type="evidence" value="ECO:0007669"/>
    <property type="project" value="UniProtKB-UniRule"/>
</dbReference>
<dbReference type="GO" id="GO:0050560">
    <property type="term" value="F:aspartate-tRNA(Asn) ligase activity"/>
    <property type="evidence" value="ECO:0007669"/>
    <property type="project" value="UniProtKB-EC"/>
</dbReference>
<dbReference type="GO" id="GO:0005524">
    <property type="term" value="F:ATP binding"/>
    <property type="evidence" value="ECO:0007669"/>
    <property type="project" value="UniProtKB-UniRule"/>
</dbReference>
<dbReference type="GO" id="GO:0003676">
    <property type="term" value="F:nucleic acid binding"/>
    <property type="evidence" value="ECO:0007669"/>
    <property type="project" value="InterPro"/>
</dbReference>
<dbReference type="GO" id="GO:0006422">
    <property type="term" value="P:aspartyl-tRNA aminoacylation"/>
    <property type="evidence" value="ECO:0007669"/>
    <property type="project" value="UniProtKB-UniRule"/>
</dbReference>
<dbReference type="CDD" id="cd00777">
    <property type="entry name" value="AspRS_core"/>
    <property type="match status" value="1"/>
</dbReference>
<dbReference type="CDD" id="cd04317">
    <property type="entry name" value="EcAspRS_like_N"/>
    <property type="match status" value="1"/>
</dbReference>
<dbReference type="Gene3D" id="3.30.930.10">
    <property type="entry name" value="Bira Bifunctional Protein, Domain 2"/>
    <property type="match status" value="1"/>
</dbReference>
<dbReference type="Gene3D" id="3.30.1360.30">
    <property type="entry name" value="GAD-like domain"/>
    <property type="match status" value="1"/>
</dbReference>
<dbReference type="Gene3D" id="2.40.50.140">
    <property type="entry name" value="Nucleic acid-binding proteins"/>
    <property type="match status" value="1"/>
</dbReference>
<dbReference type="HAMAP" id="MF_00044">
    <property type="entry name" value="Asp_tRNA_synth_type1"/>
    <property type="match status" value="1"/>
</dbReference>
<dbReference type="InterPro" id="IPR004364">
    <property type="entry name" value="Aa-tRNA-synt_II"/>
</dbReference>
<dbReference type="InterPro" id="IPR006195">
    <property type="entry name" value="aa-tRNA-synth_II"/>
</dbReference>
<dbReference type="InterPro" id="IPR045864">
    <property type="entry name" value="aa-tRNA-synth_II/BPL/LPL"/>
</dbReference>
<dbReference type="InterPro" id="IPR004524">
    <property type="entry name" value="Asp-tRNA-ligase_1"/>
</dbReference>
<dbReference type="InterPro" id="IPR047089">
    <property type="entry name" value="Asp-tRNA-ligase_1_N"/>
</dbReference>
<dbReference type="InterPro" id="IPR002312">
    <property type="entry name" value="Asp/Asn-tRNA-synth_IIb"/>
</dbReference>
<dbReference type="InterPro" id="IPR047090">
    <property type="entry name" value="AspRS_core"/>
</dbReference>
<dbReference type="InterPro" id="IPR004115">
    <property type="entry name" value="GAD-like_sf"/>
</dbReference>
<dbReference type="InterPro" id="IPR029351">
    <property type="entry name" value="GAD_dom"/>
</dbReference>
<dbReference type="InterPro" id="IPR012340">
    <property type="entry name" value="NA-bd_OB-fold"/>
</dbReference>
<dbReference type="InterPro" id="IPR004365">
    <property type="entry name" value="NA-bd_OB_tRNA"/>
</dbReference>
<dbReference type="NCBIfam" id="TIGR00459">
    <property type="entry name" value="aspS_bact"/>
    <property type="match status" value="1"/>
</dbReference>
<dbReference type="NCBIfam" id="NF001750">
    <property type="entry name" value="PRK00476.1"/>
    <property type="match status" value="1"/>
</dbReference>
<dbReference type="PANTHER" id="PTHR22594:SF5">
    <property type="entry name" value="ASPARTATE--TRNA LIGASE, MITOCHONDRIAL"/>
    <property type="match status" value="1"/>
</dbReference>
<dbReference type="PANTHER" id="PTHR22594">
    <property type="entry name" value="ASPARTYL/LYSYL-TRNA SYNTHETASE"/>
    <property type="match status" value="1"/>
</dbReference>
<dbReference type="Pfam" id="PF02938">
    <property type="entry name" value="GAD"/>
    <property type="match status" value="1"/>
</dbReference>
<dbReference type="Pfam" id="PF00152">
    <property type="entry name" value="tRNA-synt_2"/>
    <property type="match status" value="1"/>
</dbReference>
<dbReference type="Pfam" id="PF01336">
    <property type="entry name" value="tRNA_anti-codon"/>
    <property type="match status" value="1"/>
</dbReference>
<dbReference type="PRINTS" id="PR01042">
    <property type="entry name" value="TRNASYNTHASP"/>
</dbReference>
<dbReference type="SUPFAM" id="SSF55681">
    <property type="entry name" value="Class II aaRS and biotin synthetases"/>
    <property type="match status" value="1"/>
</dbReference>
<dbReference type="SUPFAM" id="SSF55261">
    <property type="entry name" value="GAD domain-like"/>
    <property type="match status" value="1"/>
</dbReference>
<dbReference type="SUPFAM" id="SSF50249">
    <property type="entry name" value="Nucleic acid-binding proteins"/>
    <property type="match status" value="1"/>
</dbReference>
<dbReference type="PROSITE" id="PS50862">
    <property type="entry name" value="AA_TRNA_LIGASE_II"/>
    <property type="match status" value="1"/>
</dbReference>
<gene>
    <name evidence="1" type="primary">aspS</name>
    <name type="ordered locus">Avin_36730</name>
</gene>
<reference key="1">
    <citation type="journal article" date="2009" name="J. Bacteriol.">
        <title>Genome sequence of Azotobacter vinelandii, an obligate aerobe specialized to support diverse anaerobic metabolic processes.</title>
        <authorList>
            <person name="Setubal J.C."/>
            <person name="Dos Santos P."/>
            <person name="Goldman B.S."/>
            <person name="Ertesvaag H."/>
            <person name="Espin G."/>
            <person name="Rubio L.M."/>
            <person name="Valla S."/>
            <person name="Almeida N.F."/>
            <person name="Balasubramanian D."/>
            <person name="Cromes L."/>
            <person name="Curatti L."/>
            <person name="Du Z."/>
            <person name="Godsy E."/>
            <person name="Goodner B."/>
            <person name="Hellner-Burris K."/>
            <person name="Hernandez J.A."/>
            <person name="Houmiel K."/>
            <person name="Imperial J."/>
            <person name="Kennedy C."/>
            <person name="Larson T.J."/>
            <person name="Latreille P."/>
            <person name="Ligon L.S."/>
            <person name="Lu J."/>
            <person name="Maerk M."/>
            <person name="Miller N.M."/>
            <person name="Norton S."/>
            <person name="O'Carroll I.P."/>
            <person name="Paulsen I."/>
            <person name="Raulfs E.C."/>
            <person name="Roemer R."/>
            <person name="Rosser J."/>
            <person name="Segura D."/>
            <person name="Slater S."/>
            <person name="Stricklin S.L."/>
            <person name="Studholme D.J."/>
            <person name="Sun J."/>
            <person name="Viana C.J."/>
            <person name="Wallin E."/>
            <person name="Wang B."/>
            <person name="Wheeler C."/>
            <person name="Zhu H."/>
            <person name="Dean D.R."/>
            <person name="Dixon R."/>
            <person name="Wood D."/>
        </authorList>
    </citation>
    <scope>NUCLEOTIDE SEQUENCE [LARGE SCALE GENOMIC DNA]</scope>
    <source>
        <strain>DJ / ATCC BAA-1303</strain>
    </source>
</reference>
<protein>
    <recommendedName>
        <fullName evidence="1">Aspartate--tRNA(Asp/Asn) ligase</fullName>
        <ecNumber evidence="1">6.1.1.23</ecNumber>
    </recommendedName>
    <alternativeName>
        <fullName evidence="1">Aspartyl-tRNA synthetase</fullName>
        <shortName evidence="1">AspRS</shortName>
    </alternativeName>
    <alternativeName>
        <fullName evidence="1">Non-discriminating aspartyl-tRNA synthetase</fullName>
        <shortName evidence="1">ND-AspRS</shortName>
    </alternativeName>
</protein>
<accession>C1DRG2</accession>
<evidence type="ECO:0000255" key="1">
    <source>
        <dbReference type="HAMAP-Rule" id="MF_00044"/>
    </source>
</evidence>
<feature type="chain" id="PRO_1000202149" description="Aspartate--tRNA(Asp/Asn) ligase">
    <location>
        <begin position="1"/>
        <end position="591"/>
    </location>
</feature>
<feature type="region of interest" description="Aspartate" evidence="1">
    <location>
        <begin position="198"/>
        <end position="201"/>
    </location>
</feature>
<feature type="binding site" evidence="1">
    <location>
        <position position="174"/>
    </location>
    <ligand>
        <name>L-aspartate</name>
        <dbReference type="ChEBI" id="CHEBI:29991"/>
    </ligand>
</feature>
<feature type="binding site" evidence="1">
    <location>
        <begin position="220"/>
        <end position="222"/>
    </location>
    <ligand>
        <name>ATP</name>
        <dbReference type="ChEBI" id="CHEBI:30616"/>
    </ligand>
</feature>
<feature type="binding site" evidence="1">
    <location>
        <position position="220"/>
    </location>
    <ligand>
        <name>L-aspartate</name>
        <dbReference type="ChEBI" id="CHEBI:29991"/>
    </ligand>
</feature>
<feature type="binding site" evidence="1">
    <location>
        <position position="229"/>
    </location>
    <ligand>
        <name>ATP</name>
        <dbReference type="ChEBI" id="CHEBI:30616"/>
    </ligand>
</feature>
<feature type="binding site" evidence="1">
    <location>
        <position position="450"/>
    </location>
    <ligand>
        <name>L-aspartate</name>
        <dbReference type="ChEBI" id="CHEBI:29991"/>
    </ligand>
</feature>
<feature type="binding site" evidence="1">
    <location>
        <position position="483"/>
    </location>
    <ligand>
        <name>ATP</name>
        <dbReference type="ChEBI" id="CHEBI:30616"/>
    </ligand>
</feature>
<feature type="binding site" evidence="1">
    <location>
        <position position="490"/>
    </location>
    <ligand>
        <name>L-aspartate</name>
        <dbReference type="ChEBI" id="CHEBI:29991"/>
    </ligand>
</feature>
<feature type="binding site" evidence="1">
    <location>
        <begin position="535"/>
        <end position="538"/>
    </location>
    <ligand>
        <name>ATP</name>
        <dbReference type="ChEBI" id="CHEBI:30616"/>
    </ligand>
</feature>
<feature type="site" description="Important for tRNA non-discrimination" evidence="1">
    <location>
        <position position="31"/>
    </location>
</feature>
<feature type="site" description="Important for tRNA non-discrimination" evidence="1">
    <location>
        <position position="82"/>
    </location>
</feature>
<comment type="function">
    <text evidence="1">Aspartyl-tRNA synthetase with relaxed tRNA specificity since it is able to aspartylate not only its cognate tRNA(Asp) but also tRNA(Asn). Reaction proceeds in two steps: L-aspartate is first activated by ATP to form Asp-AMP and then transferred to the acceptor end of tRNA(Asp/Asn).</text>
</comment>
<comment type="catalytic activity">
    <reaction evidence="1">
        <text>tRNA(Asx) + L-aspartate + ATP = L-aspartyl-tRNA(Asx) + AMP + diphosphate</text>
        <dbReference type="Rhea" id="RHEA:18349"/>
        <dbReference type="Rhea" id="RHEA-COMP:9710"/>
        <dbReference type="Rhea" id="RHEA-COMP:9711"/>
        <dbReference type="ChEBI" id="CHEBI:29991"/>
        <dbReference type="ChEBI" id="CHEBI:30616"/>
        <dbReference type="ChEBI" id="CHEBI:33019"/>
        <dbReference type="ChEBI" id="CHEBI:78442"/>
        <dbReference type="ChEBI" id="CHEBI:78516"/>
        <dbReference type="ChEBI" id="CHEBI:456215"/>
        <dbReference type="EC" id="6.1.1.23"/>
    </reaction>
</comment>
<comment type="subunit">
    <text evidence="1">Homodimer.</text>
</comment>
<comment type="subcellular location">
    <subcellularLocation>
        <location evidence="1">Cytoplasm</location>
    </subcellularLocation>
</comment>
<comment type="similarity">
    <text evidence="1">Belongs to the class-II aminoacyl-tRNA synthetase family. Type 1 subfamily.</text>
</comment>
<sequence length="591" mass="66029">MMRSHYCGQLNESLEGQEVTLCGWVHRRRDHGGVIFLDIRDREGLAQVVFDPDRAETFAKADRVRSEYVVRITGKVRPRPAGAVNPNMASGAIEVLGYELDVLNQAETPPFPLDEYSDVGEETRLRYRFIDLRRPEMAAKLKLRSSITSSIRRYLDENGFLDVETPILTRATPEGARDYLVPSRTHAGSFFALPQSPQLFKQLLMVAGFDRYYQIAKCFRDEDLRADRQPEFTQIDIETSFLDEADIMGITENMIRKLFKEVLDVEFGELPHMTFEEAMRRYGSDKPDLRIPLELVDVADQLKAVEFKVFSGPANDPKGRVAALRVPGAASMPRSQIDDYTRFVGIYGAKGLAYIKVNERAKGVEGLQSPIVKFIPKENLDVILDRVGAVDGDIVFFGADKAKIVSEALGALRIRLGHDLKLLTCEWAPLWVVDFPMFEENDDGSLSALHHPFTAPKCTPEELAANPAVALSRAYDMVLNGTELGGGSIRIHRKEMQQAVFRILGIDEAEQQEKFGFLLDALKYGAPPHGGLAFGLDRLVMLMTGASSIREVIAFPKTQSAACVMTQAPGAVDAKALRELHIRLREQPKAE</sequence>
<proteinExistence type="inferred from homology"/>
<organism>
    <name type="scientific">Azotobacter vinelandii (strain DJ / ATCC BAA-1303)</name>
    <dbReference type="NCBI Taxonomy" id="322710"/>
    <lineage>
        <taxon>Bacteria</taxon>
        <taxon>Pseudomonadati</taxon>
        <taxon>Pseudomonadota</taxon>
        <taxon>Gammaproteobacteria</taxon>
        <taxon>Pseudomonadales</taxon>
        <taxon>Pseudomonadaceae</taxon>
        <taxon>Azotobacter</taxon>
    </lineage>
</organism>
<name>SYDND_AZOVD</name>